<sequence length="152" mass="16477">MAKSILLINGPNLNLLGTREPSIYGSTTLPQVVESASSQCSRLSITFSHIQSNHEGVLIDRIHEARGNVDAIVINPGALTHTSVGLRDALVGVDIPFVEVHISNIHKREAFRHHSYLSDKAEAVICGLGTYGYEAAIEYAARHIKPKGEAQL</sequence>
<gene>
    <name evidence="1" type="primary">qutE</name>
    <name type="ORF">SNOG_11441</name>
</gene>
<organism>
    <name type="scientific">Phaeosphaeria nodorum (strain SN15 / ATCC MYA-4574 / FGSC 10173)</name>
    <name type="common">Glume blotch fungus</name>
    <name type="synonym">Parastagonospora nodorum</name>
    <dbReference type="NCBI Taxonomy" id="321614"/>
    <lineage>
        <taxon>Eukaryota</taxon>
        <taxon>Fungi</taxon>
        <taxon>Dikarya</taxon>
        <taxon>Ascomycota</taxon>
        <taxon>Pezizomycotina</taxon>
        <taxon>Dothideomycetes</taxon>
        <taxon>Pleosporomycetidae</taxon>
        <taxon>Pleosporales</taxon>
        <taxon>Pleosporineae</taxon>
        <taxon>Phaeosphaeriaceae</taxon>
        <taxon>Parastagonospora</taxon>
    </lineage>
</organism>
<name>3DHQ_PHANO</name>
<reference key="1">
    <citation type="journal article" date="2007" name="Plant Cell">
        <title>Dothideomycete-plant interactions illuminated by genome sequencing and EST analysis of the wheat pathogen Stagonospora nodorum.</title>
        <authorList>
            <person name="Hane J.K."/>
            <person name="Lowe R.G.T."/>
            <person name="Solomon P.S."/>
            <person name="Tan K.-C."/>
            <person name="Schoch C.L."/>
            <person name="Spatafora J.W."/>
            <person name="Crous P.W."/>
            <person name="Kodira C.D."/>
            <person name="Birren B.W."/>
            <person name="Galagan J.E."/>
            <person name="Torriani S.F.F."/>
            <person name="McDonald B.A."/>
            <person name="Oliver R.P."/>
        </authorList>
    </citation>
    <scope>NUCLEOTIDE SEQUENCE [LARGE SCALE GENOMIC DNA]</scope>
    <source>
        <strain>SN15 / ATCC MYA-4574 / FGSC 10173</strain>
    </source>
</reference>
<evidence type="ECO:0000255" key="1">
    <source>
        <dbReference type="HAMAP-Rule" id="MF_03136"/>
    </source>
</evidence>
<keyword id="KW-0456">Lyase</keyword>
<keyword id="KW-0672">Quinate metabolism</keyword>
<protein>
    <recommendedName>
        <fullName evidence="1">Catabolic 3-dehydroquinase</fullName>
        <shortName evidence="1">cDHQase</shortName>
        <ecNumber evidence="1">4.2.1.10</ecNumber>
    </recommendedName>
    <alternativeName>
        <fullName evidence="1">3-dehydroquinate dehydratase</fullName>
    </alternativeName>
</protein>
<dbReference type="EC" id="4.2.1.10" evidence="1"/>
<dbReference type="EMBL" id="CH445343">
    <property type="protein sequence ID" value="EAT81149.1"/>
    <property type="molecule type" value="Genomic_DNA"/>
</dbReference>
<dbReference type="RefSeq" id="XP_001801683.1">
    <property type="nucleotide sequence ID" value="XM_001801631.1"/>
</dbReference>
<dbReference type="SMR" id="Q0U9X3"/>
<dbReference type="STRING" id="321614.Q0U9X3"/>
<dbReference type="EnsemblFungi" id="SNOT_11441">
    <property type="protein sequence ID" value="SNOT_11441"/>
    <property type="gene ID" value="SNOG_11441"/>
</dbReference>
<dbReference type="GeneID" id="5978591"/>
<dbReference type="KEGG" id="pno:SNOG_11441"/>
<dbReference type="VEuPathDB" id="FungiDB:JI435_114410"/>
<dbReference type="eggNOG" id="ENOG502S1A9">
    <property type="taxonomic scope" value="Eukaryota"/>
</dbReference>
<dbReference type="HOGENOM" id="CLU_090968_1_0_1"/>
<dbReference type="InParanoid" id="Q0U9X3"/>
<dbReference type="OMA" id="AYTHYSY"/>
<dbReference type="OrthoDB" id="8191625at2759"/>
<dbReference type="UniPathway" id="UPA00088">
    <property type="reaction ID" value="UER00178"/>
</dbReference>
<dbReference type="Proteomes" id="UP000001055">
    <property type="component" value="Unassembled WGS sequence"/>
</dbReference>
<dbReference type="GO" id="GO:0003855">
    <property type="term" value="F:3-dehydroquinate dehydratase activity"/>
    <property type="evidence" value="ECO:0000318"/>
    <property type="project" value="GO_Central"/>
</dbReference>
<dbReference type="GO" id="GO:0046279">
    <property type="term" value="P:3,4-dihydroxybenzoate biosynthetic process"/>
    <property type="evidence" value="ECO:0007669"/>
    <property type="project" value="UniProtKB-UniRule"/>
</dbReference>
<dbReference type="GO" id="GO:0019631">
    <property type="term" value="P:quinate catabolic process"/>
    <property type="evidence" value="ECO:0000318"/>
    <property type="project" value="GO_Central"/>
</dbReference>
<dbReference type="CDD" id="cd00466">
    <property type="entry name" value="DHQase_II"/>
    <property type="match status" value="1"/>
</dbReference>
<dbReference type="Gene3D" id="3.40.50.9100">
    <property type="entry name" value="Dehydroquinase, class II"/>
    <property type="match status" value="1"/>
</dbReference>
<dbReference type="HAMAP" id="MF_00169">
    <property type="entry name" value="AroQ"/>
    <property type="match status" value="1"/>
</dbReference>
<dbReference type="InterPro" id="IPR001874">
    <property type="entry name" value="DHquinase_II"/>
</dbReference>
<dbReference type="InterPro" id="IPR018509">
    <property type="entry name" value="DHquinase_II_CS"/>
</dbReference>
<dbReference type="InterPro" id="IPR036441">
    <property type="entry name" value="DHquinase_II_sf"/>
</dbReference>
<dbReference type="NCBIfam" id="TIGR01088">
    <property type="entry name" value="aroQ"/>
    <property type="match status" value="1"/>
</dbReference>
<dbReference type="NCBIfam" id="NF003804">
    <property type="entry name" value="PRK05395.1-1"/>
    <property type="match status" value="1"/>
</dbReference>
<dbReference type="NCBIfam" id="NF003805">
    <property type="entry name" value="PRK05395.1-2"/>
    <property type="match status" value="1"/>
</dbReference>
<dbReference type="NCBIfam" id="NF003806">
    <property type="entry name" value="PRK05395.1-3"/>
    <property type="match status" value="1"/>
</dbReference>
<dbReference type="NCBIfam" id="NF003807">
    <property type="entry name" value="PRK05395.1-4"/>
    <property type="match status" value="1"/>
</dbReference>
<dbReference type="PANTHER" id="PTHR21272">
    <property type="entry name" value="CATABOLIC 3-DEHYDROQUINASE"/>
    <property type="match status" value="1"/>
</dbReference>
<dbReference type="PANTHER" id="PTHR21272:SF3">
    <property type="entry name" value="CATABOLIC 3-DEHYDROQUINASE"/>
    <property type="match status" value="1"/>
</dbReference>
<dbReference type="Pfam" id="PF01220">
    <property type="entry name" value="DHquinase_II"/>
    <property type="match status" value="1"/>
</dbReference>
<dbReference type="PIRSF" id="PIRSF001399">
    <property type="entry name" value="DHquinase_II"/>
    <property type="match status" value="1"/>
</dbReference>
<dbReference type="SUPFAM" id="SSF52304">
    <property type="entry name" value="Type II 3-dehydroquinate dehydratase"/>
    <property type="match status" value="1"/>
</dbReference>
<dbReference type="PROSITE" id="PS01029">
    <property type="entry name" value="DEHYDROQUINASE_II"/>
    <property type="match status" value="1"/>
</dbReference>
<accession>Q0U9X3</accession>
<feature type="chain" id="PRO_0000402373" description="Catabolic 3-dehydroquinase">
    <location>
        <begin position="1"/>
        <end position="152"/>
    </location>
</feature>
<feature type="active site" description="Proton acceptor" evidence="1">
    <location>
        <position position="24"/>
    </location>
</feature>
<feature type="active site" description="Proton donor" evidence="1">
    <location>
        <position position="101"/>
    </location>
</feature>
<feature type="binding site" evidence="1">
    <location>
        <position position="75"/>
    </location>
    <ligand>
        <name>substrate</name>
    </ligand>
</feature>
<feature type="binding site" evidence="1">
    <location>
        <position position="81"/>
    </location>
    <ligand>
        <name>substrate</name>
    </ligand>
</feature>
<feature type="binding site" evidence="1">
    <location>
        <position position="88"/>
    </location>
    <ligand>
        <name>substrate</name>
    </ligand>
</feature>
<feature type="binding site" evidence="1">
    <location>
        <begin position="102"/>
        <end position="103"/>
    </location>
    <ligand>
        <name>substrate</name>
    </ligand>
</feature>
<feature type="binding site" evidence="1">
    <location>
        <position position="112"/>
    </location>
    <ligand>
        <name>substrate</name>
    </ligand>
</feature>
<feature type="site" description="Transition state stabilizer" evidence="1">
    <location>
        <position position="19"/>
    </location>
</feature>
<comment type="function">
    <text evidence="1">Is involved in the catabolism of quinate. Allows the utilization of quinate as carbon source via the beta-ketoadipate pathway.</text>
</comment>
<comment type="catalytic activity">
    <reaction evidence="1">
        <text>3-dehydroquinate = 3-dehydroshikimate + H2O</text>
        <dbReference type="Rhea" id="RHEA:21096"/>
        <dbReference type="ChEBI" id="CHEBI:15377"/>
        <dbReference type="ChEBI" id="CHEBI:16630"/>
        <dbReference type="ChEBI" id="CHEBI:32364"/>
        <dbReference type="EC" id="4.2.1.10"/>
    </reaction>
</comment>
<comment type="pathway">
    <text evidence="1">Aromatic compound metabolism; 3,4-dihydroxybenzoate biosynthesis; 3,4-dihydroxybenzoate from 3-dehydroquinate: step 1/2.</text>
</comment>
<comment type="subunit">
    <text evidence="1">Homododecamer. Adopts a ring-like structure, composed of an arrangement of two hexameric rings stacked on top of one another.</text>
</comment>
<comment type="similarity">
    <text evidence="1">Belongs to the type-II 3-dehydroquinase family.</text>
</comment>
<proteinExistence type="inferred from homology"/>